<feature type="chain" id="PRO_0000329380" description="Myb-like protein D">
    <location>
        <begin position="1"/>
        <end position="595"/>
    </location>
</feature>
<feature type="domain" description="HTH myb-type" evidence="1">
    <location>
        <begin position="435"/>
        <end position="489"/>
    </location>
</feature>
<feature type="DNA-binding region" description="H-T-H motif" evidence="1">
    <location>
        <begin position="462"/>
        <end position="485"/>
    </location>
</feature>
<feature type="region of interest" description="Disordered" evidence="2">
    <location>
        <begin position="1"/>
        <end position="47"/>
    </location>
</feature>
<feature type="region of interest" description="Disordered" evidence="2">
    <location>
        <begin position="55"/>
        <end position="74"/>
    </location>
</feature>
<feature type="region of interest" description="Disordered" evidence="2">
    <location>
        <begin position="82"/>
        <end position="266"/>
    </location>
</feature>
<feature type="region of interest" description="Disordered" evidence="2">
    <location>
        <begin position="319"/>
        <end position="445"/>
    </location>
</feature>
<feature type="region of interest" description="Disordered" evidence="2">
    <location>
        <begin position="494"/>
        <end position="595"/>
    </location>
</feature>
<feature type="compositionally biased region" description="Low complexity" evidence="2">
    <location>
        <begin position="19"/>
        <end position="47"/>
    </location>
</feature>
<feature type="compositionally biased region" description="Acidic residues" evidence="2">
    <location>
        <begin position="60"/>
        <end position="74"/>
    </location>
</feature>
<feature type="compositionally biased region" description="Low complexity" evidence="2">
    <location>
        <begin position="90"/>
        <end position="212"/>
    </location>
</feature>
<feature type="compositionally biased region" description="Low complexity" evidence="2">
    <location>
        <begin position="225"/>
        <end position="264"/>
    </location>
</feature>
<feature type="compositionally biased region" description="Basic residues" evidence="2">
    <location>
        <begin position="324"/>
        <end position="348"/>
    </location>
</feature>
<feature type="compositionally biased region" description="Low complexity" evidence="2">
    <location>
        <begin position="349"/>
        <end position="368"/>
    </location>
</feature>
<feature type="compositionally biased region" description="Low complexity" evidence="2">
    <location>
        <begin position="376"/>
        <end position="420"/>
    </location>
</feature>
<feature type="compositionally biased region" description="Basic and acidic residues" evidence="2">
    <location>
        <begin position="423"/>
        <end position="434"/>
    </location>
</feature>
<feature type="compositionally biased region" description="Low complexity" evidence="2">
    <location>
        <begin position="517"/>
        <end position="595"/>
    </location>
</feature>
<gene>
    <name type="primary">mybD</name>
    <name type="ORF">DDB_G0287637</name>
</gene>
<organism>
    <name type="scientific">Dictyostelium discoideum</name>
    <name type="common">Social amoeba</name>
    <dbReference type="NCBI Taxonomy" id="44689"/>
    <lineage>
        <taxon>Eukaryota</taxon>
        <taxon>Amoebozoa</taxon>
        <taxon>Evosea</taxon>
        <taxon>Eumycetozoa</taxon>
        <taxon>Dictyostelia</taxon>
        <taxon>Dictyosteliales</taxon>
        <taxon>Dictyosteliaceae</taxon>
        <taxon>Dictyostelium</taxon>
    </lineage>
</organism>
<protein>
    <recommendedName>
        <fullName>Myb-like protein D</fullName>
    </recommendedName>
</protein>
<dbReference type="EMBL" id="AAFI02000103">
    <property type="protein sequence ID" value="EAL63627.1"/>
    <property type="molecule type" value="Genomic_DNA"/>
</dbReference>
<dbReference type="RefSeq" id="XP_637145.1">
    <property type="nucleotide sequence ID" value="XM_632053.1"/>
</dbReference>
<dbReference type="SMR" id="Q54K19"/>
<dbReference type="FunCoup" id="Q54K19">
    <property type="interactions" value="377"/>
</dbReference>
<dbReference type="STRING" id="44689.Q54K19"/>
<dbReference type="PaxDb" id="44689-DDB0220512"/>
<dbReference type="EnsemblProtists" id="EAL63627">
    <property type="protein sequence ID" value="EAL63627"/>
    <property type="gene ID" value="DDB_G0287637"/>
</dbReference>
<dbReference type="GeneID" id="8626240"/>
<dbReference type="KEGG" id="ddi:DDB_G0287637"/>
<dbReference type="dictyBase" id="DDB_G0287637">
    <property type="gene designation" value="mybD"/>
</dbReference>
<dbReference type="VEuPathDB" id="AmoebaDB:DDB_G0287637"/>
<dbReference type="HOGENOM" id="CLU_458880_0_0_1"/>
<dbReference type="InParanoid" id="Q54K19"/>
<dbReference type="OMA" id="INDTICA"/>
<dbReference type="PRO" id="PR:Q54K19"/>
<dbReference type="Proteomes" id="UP000002195">
    <property type="component" value="Chromosome 5"/>
</dbReference>
<dbReference type="GO" id="GO:0005634">
    <property type="term" value="C:nucleus"/>
    <property type="evidence" value="ECO:0000318"/>
    <property type="project" value="GO_Central"/>
</dbReference>
<dbReference type="GO" id="GO:0003677">
    <property type="term" value="F:DNA binding"/>
    <property type="evidence" value="ECO:0000250"/>
    <property type="project" value="dictyBase"/>
</dbReference>
<dbReference type="GO" id="GO:0000981">
    <property type="term" value="F:DNA-binding transcription factor activity, RNA polymerase II-specific"/>
    <property type="evidence" value="ECO:0000318"/>
    <property type="project" value="GO_Central"/>
</dbReference>
<dbReference type="GO" id="GO:0000978">
    <property type="term" value="F:RNA polymerase II cis-regulatory region sequence-specific DNA binding"/>
    <property type="evidence" value="ECO:0000318"/>
    <property type="project" value="GO_Central"/>
</dbReference>
<dbReference type="GO" id="GO:0000278">
    <property type="term" value="P:mitotic cell cycle"/>
    <property type="evidence" value="ECO:0000318"/>
    <property type="project" value="GO_Central"/>
</dbReference>
<dbReference type="GO" id="GO:0045944">
    <property type="term" value="P:positive regulation of transcription by RNA polymerase II"/>
    <property type="evidence" value="ECO:0000318"/>
    <property type="project" value="GO_Central"/>
</dbReference>
<dbReference type="CDD" id="cd00167">
    <property type="entry name" value="SANT"/>
    <property type="match status" value="1"/>
</dbReference>
<dbReference type="FunFam" id="1.10.10.60:FF:000413">
    <property type="entry name" value="Myb-like DNA-binding domain containing protein"/>
    <property type="match status" value="1"/>
</dbReference>
<dbReference type="Gene3D" id="1.10.10.60">
    <property type="entry name" value="Homeodomain-like"/>
    <property type="match status" value="1"/>
</dbReference>
<dbReference type="InterPro" id="IPR009057">
    <property type="entry name" value="Homeodomain-like_sf"/>
</dbReference>
<dbReference type="InterPro" id="IPR017930">
    <property type="entry name" value="Myb_dom"/>
</dbReference>
<dbReference type="InterPro" id="IPR001005">
    <property type="entry name" value="SANT/Myb"/>
</dbReference>
<dbReference type="Pfam" id="PF00249">
    <property type="entry name" value="Myb_DNA-binding"/>
    <property type="match status" value="1"/>
</dbReference>
<dbReference type="SMART" id="SM00717">
    <property type="entry name" value="SANT"/>
    <property type="match status" value="1"/>
</dbReference>
<dbReference type="SUPFAM" id="SSF46689">
    <property type="entry name" value="Homeodomain-like"/>
    <property type="match status" value="1"/>
</dbReference>
<dbReference type="PROSITE" id="PS51294">
    <property type="entry name" value="HTH_MYB"/>
    <property type="match status" value="1"/>
</dbReference>
<name>MYBD_DICDI</name>
<reference key="1">
    <citation type="journal article" date="2005" name="Nature">
        <title>The genome of the social amoeba Dictyostelium discoideum.</title>
        <authorList>
            <person name="Eichinger L."/>
            <person name="Pachebat J.A."/>
            <person name="Gloeckner G."/>
            <person name="Rajandream M.A."/>
            <person name="Sucgang R."/>
            <person name="Berriman M."/>
            <person name="Song J."/>
            <person name="Olsen R."/>
            <person name="Szafranski K."/>
            <person name="Xu Q."/>
            <person name="Tunggal B."/>
            <person name="Kummerfeld S."/>
            <person name="Madera M."/>
            <person name="Konfortov B.A."/>
            <person name="Rivero F."/>
            <person name="Bankier A.T."/>
            <person name="Lehmann R."/>
            <person name="Hamlin N."/>
            <person name="Davies R."/>
            <person name="Gaudet P."/>
            <person name="Fey P."/>
            <person name="Pilcher K."/>
            <person name="Chen G."/>
            <person name="Saunders D."/>
            <person name="Sodergren E.J."/>
            <person name="Davis P."/>
            <person name="Kerhornou A."/>
            <person name="Nie X."/>
            <person name="Hall N."/>
            <person name="Anjard C."/>
            <person name="Hemphill L."/>
            <person name="Bason N."/>
            <person name="Farbrother P."/>
            <person name="Desany B."/>
            <person name="Just E."/>
            <person name="Morio T."/>
            <person name="Rost R."/>
            <person name="Churcher C.M."/>
            <person name="Cooper J."/>
            <person name="Haydock S."/>
            <person name="van Driessche N."/>
            <person name="Cronin A."/>
            <person name="Goodhead I."/>
            <person name="Muzny D.M."/>
            <person name="Mourier T."/>
            <person name="Pain A."/>
            <person name="Lu M."/>
            <person name="Harper D."/>
            <person name="Lindsay R."/>
            <person name="Hauser H."/>
            <person name="James K.D."/>
            <person name="Quiles M."/>
            <person name="Madan Babu M."/>
            <person name="Saito T."/>
            <person name="Buchrieser C."/>
            <person name="Wardroper A."/>
            <person name="Felder M."/>
            <person name="Thangavelu M."/>
            <person name="Johnson D."/>
            <person name="Knights A."/>
            <person name="Loulseged H."/>
            <person name="Mungall K.L."/>
            <person name="Oliver K."/>
            <person name="Price C."/>
            <person name="Quail M.A."/>
            <person name="Urushihara H."/>
            <person name="Hernandez J."/>
            <person name="Rabbinowitsch E."/>
            <person name="Steffen D."/>
            <person name="Sanders M."/>
            <person name="Ma J."/>
            <person name="Kohara Y."/>
            <person name="Sharp S."/>
            <person name="Simmonds M.N."/>
            <person name="Spiegler S."/>
            <person name="Tivey A."/>
            <person name="Sugano S."/>
            <person name="White B."/>
            <person name="Walker D."/>
            <person name="Woodward J.R."/>
            <person name="Winckler T."/>
            <person name="Tanaka Y."/>
            <person name="Shaulsky G."/>
            <person name="Schleicher M."/>
            <person name="Weinstock G.M."/>
            <person name="Rosenthal A."/>
            <person name="Cox E.C."/>
            <person name="Chisholm R.L."/>
            <person name="Gibbs R.A."/>
            <person name="Loomis W.F."/>
            <person name="Platzer M."/>
            <person name="Kay R.R."/>
            <person name="Williams J.G."/>
            <person name="Dear P.H."/>
            <person name="Noegel A.A."/>
            <person name="Barrell B.G."/>
            <person name="Kuspa A."/>
        </authorList>
    </citation>
    <scope>NUCLEOTIDE SEQUENCE [LARGE SCALE GENOMIC DNA]</scope>
    <source>
        <strain>AX4</strain>
    </source>
</reference>
<comment type="subcellular location">
    <subcellularLocation>
        <location evidence="1">Nucleus</location>
    </subcellularLocation>
</comment>
<sequence length="595" mass="69126">MQQQSEISKQVFISPDLSDNYNNNNSNINTNNNNSINDYENQNNGLVVPQSNQNQQYQDDQNDSFDDDSMDEGEEKSNLIIDESQQNSLNNNNNNSENNNINNSENNNINNSENNIHNNNNNNNNNNNNNNNNNNNNNNNNNNNNNNNNNNNNNTINNNNNNNNINNNINNNNNNYNNNNINNNNNINNNNNNNNENNNNNENNNNNNENNNKFIGSPMGEPQINNNNNNNNNNNNNNNNNNNNNNNNKNNNNNNNNNNNNNNNRKFDDQQIIKDLENRLKEAKKTNQLLDEKCNQLKKNITEKNHLLSRYINTLNSSVLQKKTLNRNRSRSRSRSNSRSHSRSRSRSRSLSSISRSRSRSRLIYSRSPSQSPQKNNNNNNNTNKSNSNNNNNHFNNNNNNNNNNNNNNNNNNNNNNNNNNKRKSEDDNQDDGKKKHRKNAIWTQEEDEKMAQLYNKYGKSWKAIHSHFDDKTREQVQSHGQYLIRIGKLEDIHRDGRKERRKGKQALQERQQQLEQQNQQNNNNNNYNNNINNNSNYNNNNNNINNSINNNNSNQNNYSDNNSNNNNNYGDNNITHNNYNDNSLNSSNYVNNDN</sequence>
<evidence type="ECO:0000255" key="1">
    <source>
        <dbReference type="PROSITE-ProRule" id="PRU00625"/>
    </source>
</evidence>
<evidence type="ECO:0000256" key="2">
    <source>
        <dbReference type="SAM" id="MobiDB-lite"/>
    </source>
</evidence>
<accession>Q54K19</accession>
<keyword id="KW-0238">DNA-binding</keyword>
<keyword id="KW-0539">Nucleus</keyword>
<keyword id="KW-1185">Reference proteome</keyword>
<keyword id="KW-0804">Transcription</keyword>
<keyword id="KW-0805">Transcription regulation</keyword>
<proteinExistence type="inferred from homology"/>